<name>ATPA_ROSCS</name>
<protein>
    <recommendedName>
        <fullName evidence="2">ATP synthase subunit alpha</fullName>
        <ecNumber evidence="2">7.1.2.2</ecNumber>
    </recommendedName>
    <alternativeName>
        <fullName evidence="2">ATP synthase F1 sector subunit alpha</fullName>
    </alternativeName>
    <alternativeName>
        <fullName evidence="2">F-ATPase subunit alpha</fullName>
    </alternativeName>
</protein>
<organism>
    <name type="scientific">Roseiflexus castenholzii (strain DSM 13941 / HLO8)</name>
    <dbReference type="NCBI Taxonomy" id="383372"/>
    <lineage>
        <taxon>Bacteria</taxon>
        <taxon>Bacillati</taxon>
        <taxon>Chloroflexota</taxon>
        <taxon>Chloroflexia</taxon>
        <taxon>Chloroflexales</taxon>
        <taxon>Roseiflexineae</taxon>
        <taxon>Roseiflexaceae</taxon>
        <taxon>Roseiflexus</taxon>
    </lineage>
</organism>
<accession>A7NIR1</accession>
<feature type="chain" id="PRO_0000339055" description="ATP synthase subunit alpha">
    <location>
        <begin position="1"/>
        <end position="526"/>
    </location>
</feature>
<feature type="binding site" evidence="2">
    <location>
        <begin position="178"/>
        <end position="185"/>
    </location>
    <ligand>
        <name>ATP</name>
        <dbReference type="ChEBI" id="CHEBI:30616"/>
    </ligand>
</feature>
<feature type="site" description="Required for activity" evidence="2">
    <location>
        <position position="379"/>
    </location>
</feature>
<dbReference type="EC" id="7.1.2.2" evidence="2"/>
<dbReference type="EMBL" id="CP000804">
    <property type="protein sequence ID" value="ABU57364.1"/>
    <property type="molecule type" value="Genomic_DNA"/>
</dbReference>
<dbReference type="SMR" id="A7NIR1"/>
<dbReference type="STRING" id="383372.Rcas_1267"/>
<dbReference type="KEGG" id="rca:Rcas_1267"/>
<dbReference type="eggNOG" id="COG0056">
    <property type="taxonomic scope" value="Bacteria"/>
</dbReference>
<dbReference type="HOGENOM" id="CLU_010091_2_1_0"/>
<dbReference type="OrthoDB" id="9803053at2"/>
<dbReference type="Proteomes" id="UP000000263">
    <property type="component" value="Chromosome"/>
</dbReference>
<dbReference type="GO" id="GO:0005886">
    <property type="term" value="C:plasma membrane"/>
    <property type="evidence" value="ECO:0007669"/>
    <property type="project" value="UniProtKB-SubCell"/>
</dbReference>
<dbReference type="GO" id="GO:0045259">
    <property type="term" value="C:proton-transporting ATP synthase complex"/>
    <property type="evidence" value="ECO:0007669"/>
    <property type="project" value="UniProtKB-KW"/>
</dbReference>
<dbReference type="GO" id="GO:0043531">
    <property type="term" value="F:ADP binding"/>
    <property type="evidence" value="ECO:0007669"/>
    <property type="project" value="TreeGrafter"/>
</dbReference>
<dbReference type="GO" id="GO:0005524">
    <property type="term" value="F:ATP binding"/>
    <property type="evidence" value="ECO:0007669"/>
    <property type="project" value="UniProtKB-UniRule"/>
</dbReference>
<dbReference type="GO" id="GO:0046933">
    <property type="term" value="F:proton-transporting ATP synthase activity, rotational mechanism"/>
    <property type="evidence" value="ECO:0007669"/>
    <property type="project" value="UniProtKB-UniRule"/>
</dbReference>
<dbReference type="CDD" id="cd18113">
    <property type="entry name" value="ATP-synt_F1_alpha_C"/>
    <property type="match status" value="1"/>
</dbReference>
<dbReference type="CDD" id="cd18116">
    <property type="entry name" value="ATP-synt_F1_alpha_N"/>
    <property type="match status" value="1"/>
</dbReference>
<dbReference type="CDD" id="cd01132">
    <property type="entry name" value="F1-ATPase_alpha_CD"/>
    <property type="match status" value="1"/>
</dbReference>
<dbReference type="FunFam" id="1.20.150.20:FF:000001">
    <property type="entry name" value="ATP synthase subunit alpha"/>
    <property type="match status" value="1"/>
</dbReference>
<dbReference type="FunFam" id="3.40.50.300:FF:000002">
    <property type="entry name" value="ATP synthase subunit alpha"/>
    <property type="match status" value="1"/>
</dbReference>
<dbReference type="Gene3D" id="2.40.30.20">
    <property type="match status" value="1"/>
</dbReference>
<dbReference type="Gene3D" id="1.20.150.20">
    <property type="entry name" value="ATP synthase alpha/beta chain, C-terminal domain"/>
    <property type="match status" value="1"/>
</dbReference>
<dbReference type="Gene3D" id="3.40.50.300">
    <property type="entry name" value="P-loop containing nucleotide triphosphate hydrolases"/>
    <property type="match status" value="1"/>
</dbReference>
<dbReference type="HAMAP" id="MF_01346">
    <property type="entry name" value="ATP_synth_alpha_bact"/>
    <property type="match status" value="1"/>
</dbReference>
<dbReference type="InterPro" id="IPR023366">
    <property type="entry name" value="ATP_synth_asu-like_sf"/>
</dbReference>
<dbReference type="InterPro" id="IPR000793">
    <property type="entry name" value="ATP_synth_asu_C"/>
</dbReference>
<dbReference type="InterPro" id="IPR038376">
    <property type="entry name" value="ATP_synth_asu_C_sf"/>
</dbReference>
<dbReference type="InterPro" id="IPR033732">
    <property type="entry name" value="ATP_synth_F1_a_nt-bd_dom"/>
</dbReference>
<dbReference type="InterPro" id="IPR005294">
    <property type="entry name" value="ATP_synth_F1_asu"/>
</dbReference>
<dbReference type="InterPro" id="IPR020003">
    <property type="entry name" value="ATPase_a/bsu_AS"/>
</dbReference>
<dbReference type="InterPro" id="IPR004100">
    <property type="entry name" value="ATPase_F1/V1/A1_a/bsu_N"/>
</dbReference>
<dbReference type="InterPro" id="IPR036121">
    <property type="entry name" value="ATPase_F1/V1/A1_a/bsu_N_sf"/>
</dbReference>
<dbReference type="InterPro" id="IPR000194">
    <property type="entry name" value="ATPase_F1/V1/A1_a/bsu_nucl-bd"/>
</dbReference>
<dbReference type="InterPro" id="IPR027417">
    <property type="entry name" value="P-loop_NTPase"/>
</dbReference>
<dbReference type="NCBIfam" id="TIGR00962">
    <property type="entry name" value="atpA"/>
    <property type="match status" value="1"/>
</dbReference>
<dbReference type="NCBIfam" id="NF009884">
    <property type="entry name" value="PRK13343.1"/>
    <property type="match status" value="1"/>
</dbReference>
<dbReference type="PANTHER" id="PTHR48082">
    <property type="entry name" value="ATP SYNTHASE SUBUNIT ALPHA, MITOCHONDRIAL"/>
    <property type="match status" value="1"/>
</dbReference>
<dbReference type="PANTHER" id="PTHR48082:SF2">
    <property type="entry name" value="ATP SYNTHASE SUBUNIT ALPHA, MITOCHONDRIAL"/>
    <property type="match status" value="1"/>
</dbReference>
<dbReference type="Pfam" id="PF00006">
    <property type="entry name" value="ATP-synt_ab"/>
    <property type="match status" value="1"/>
</dbReference>
<dbReference type="Pfam" id="PF00306">
    <property type="entry name" value="ATP-synt_ab_C"/>
    <property type="match status" value="1"/>
</dbReference>
<dbReference type="Pfam" id="PF02874">
    <property type="entry name" value="ATP-synt_ab_N"/>
    <property type="match status" value="1"/>
</dbReference>
<dbReference type="SUPFAM" id="SSF47917">
    <property type="entry name" value="C-terminal domain of alpha and beta subunits of F1 ATP synthase"/>
    <property type="match status" value="1"/>
</dbReference>
<dbReference type="SUPFAM" id="SSF50615">
    <property type="entry name" value="N-terminal domain of alpha and beta subunits of F1 ATP synthase"/>
    <property type="match status" value="1"/>
</dbReference>
<dbReference type="SUPFAM" id="SSF52540">
    <property type="entry name" value="P-loop containing nucleoside triphosphate hydrolases"/>
    <property type="match status" value="1"/>
</dbReference>
<dbReference type="PROSITE" id="PS00152">
    <property type="entry name" value="ATPASE_ALPHA_BETA"/>
    <property type="match status" value="1"/>
</dbReference>
<gene>
    <name evidence="2" type="primary">atpA</name>
    <name type="ordered locus">Rcas_1267</name>
</gene>
<keyword id="KW-0066">ATP synthesis</keyword>
<keyword id="KW-0067">ATP-binding</keyword>
<keyword id="KW-1003">Cell membrane</keyword>
<keyword id="KW-0139">CF(1)</keyword>
<keyword id="KW-0375">Hydrogen ion transport</keyword>
<keyword id="KW-0406">Ion transport</keyword>
<keyword id="KW-0472">Membrane</keyword>
<keyword id="KW-0547">Nucleotide-binding</keyword>
<keyword id="KW-1185">Reference proteome</keyword>
<keyword id="KW-1278">Translocase</keyword>
<keyword id="KW-0813">Transport</keyword>
<proteinExistence type="inferred from homology"/>
<sequence>MMTVATTEELYQRLLKSIREGVDLQPKMVNVGTVIQVGDGVAKISGLEQAMASELLEFPPKAGRSEPVFGIALNLEKDAVSAIILGDYLGIEEGDQVNSTGRVISAPVGQALIGRVVNALGQPIDGKGPIQTTKYRPIERIAPGVITRKSVDTPVQTGIIAIDAMIPIGRGQRELIIGDRQTGKTAVAIDTIINQKGKGMVCIYVAIGQKRAQVAQIINFLEKYGAMDYTIVVSATASESAALQYIAPYAGCAMGEEVMENGVIIDGQEVRDALIVYDDLSKHATAYRQVSLLLRRPPGREAYPGDVFYLHSRLLERAARLNEDYGGGSLTALPIIETQANDVSAYIPTNVISITDGQIYLETDLFNAGIRPALNVGISVSRVGGAAQTRAMRSVSDRLKIDMAQFRDLAAFAQFASDLDATTRAQIERGQRLQEVLKQPQFQPMPLEEQVVILFAGINGYLDDVPINQIGRFKSELVNYMRTAHPEVGKMIFENRLDRKFPSPEIRSAIEHMLKEFKQMSTFAEG</sequence>
<comment type="function">
    <text evidence="2">Produces ATP from ADP in the presence of a proton gradient across the membrane. The alpha chain is a regulatory subunit.</text>
</comment>
<comment type="catalytic activity">
    <reaction evidence="2">
        <text>ATP + H2O + 4 H(+)(in) = ADP + phosphate + 5 H(+)(out)</text>
        <dbReference type="Rhea" id="RHEA:57720"/>
        <dbReference type="ChEBI" id="CHEBI:15377"/>
        <dbReference type="ChEBI" id="CHEBI:15378"/>
        <dbReference type="ChEBI" id="CHEBI:30616"/>
        <dbReference type="ChEBI" id="CHEBI:43474"/>
        <dbReference type="ChEBI" id="CHEBI:456216"/>
        <dbReference type="EC" id="7.1.2.2"/>
    </reaction>
</comment>
<comment type="subunit">
    <text evidence="1">F-type ATPases have 2 components, CF(1) - the catalytic core - and CF(0) - the membrane proton channel. CF(1) has five subunits: alpha(3), beta(3), gamma(1), delta(1), epsilon(1). CF(0) has four main subunits: a(1), b(1), b'(1) and c(9-12) (By similarity).</text>
</comment>
<comment type="subcellular location">
    <subcellularLocation>
        <location evidence="2">Cell membrane</location>
        <topology evidence="2">Peripheral membrane protein</topology>
    </subcellularLocation>
</comment>
<comment type="similarity">
    <text evidence="2">Belongs to the ATPase alpha/beta chains family.</text>
</comment>
<evidence type="ECO:0000250" key="1"/>
<evidence type="ECO:0000255" key="2">
    <source>
        <dbReference type="HAMAP-Rule" id="MF_01346"/>
    </source>
</evidence>
<reference key="1">
    <citation type="submission" date="2007-08" db="EMBL/GenBank/DDBJ databases">
        <title>Complete sequence of Roseiflexus castenholzii DSM 13941.</title>
        <authorList>
            <consortium name="US DOE Joint Genome Institute"/>
            <person name="Copeland A."/>
            <person name="Lucas S."/>
            <person name="Lapidus A."/>
            <person name="Barry K."/>
            <person name="Glavina del Rio T."/>
            <person name="Dalin E."/>
            <person name="Tice H."/>
            <person name="Pitluck S."/>
            <person name="Thompson L.S."/>
            <person name="Brettin T."/>
            <person name="Bruce D."/>
            <person name="Detter J.C."/>
            <person name="Han C."/>
            <person name="Tapia R."/>
            <person name="Schmutz J."/>
            <person name="Larimer F."/>
            <person name="Land M."/>
            <person name="Hauser L."/>
            <person name="Kyrpides N."/>
            <person name="Mikhailova N."/>
            <person name="Bryant D.A."/>
            <person name="Hanada S."/>
            <person name="Tsukatani Y."/>
            <person name="Richardson P."/>
        </authorList>
    </citation>
    <scope>NUCLEOTIDE SEQUENCE [LARGE SCALE GENOMIC DNA]</scope>
    <source>
        <strain>DSM 13941 / HLO8</strain>
    </source>
</reference>